<dbReference type="EMBL" id="U00008">
    <property type="protein sequence ID" value="AAA16392.1"/>
    <property type="molecule type" value="Genomic_DNA"/>
</dbReference>
<dbReference type="EMBL" id="U00096">
    <property type="protein sequence ID" value="AAC75260.1"/>
    <property type="molecule type" value="Genomic_DNA"/>
</dbReference>
<dbReference type="EMBL" id="AP009048">
    <property type="protein sequence ID" value="BAE76663.1"/>
    <property type="molecule type" value="Genomic_DNA"/>
</dbReference>
<dbReference type="PIR" id="F64989">
    <property type="entry name" value="F64989"/>
</dbReference>
<dbReference type="RefSeq" id="NP_416704.1">
    <property type="nucleotide sequence ID" value="NC_000913.3"/>
</dbReference>
<dbReference type="RefSeq" id="WP_000971730.1">
    <property type="nucleotide sequence ID" value="NZ_LN832404.1"/>
</dbReference>
<dbReference type="PDB" id="7F02">
    <property type="method" value="EM"/>
    <property type="resolution" value="3.24 A"/>
    <property type="chains" value="B/F=1-220"/>
</dbReference>
<dbReference type="PDB" id="7F03">
    <property type="method" value="EM"/>
    <property type="resolution" value="3.29 A"/>
    <property type="chains" value="B/F=1-220"/>
</dbReference>
<dbReference type="PDB" id="7F04">
    <property type="method" value="EM"/>
    <property type="resolution" value="2.86 A"/>
    <property type="chains" value="B/F=1-220"/>
</dbReference>
<dbReference type="PDB" id="7VFJ">
    <property type="method" value="EM"/>
    <property type="resolution" value="3.98 A"/>
    <property type="chains" value="B/F=1-220"/>
</dbReference>
<dbReference type="PDB" id="7VFP">
    <property type="method" value="EM"/>
    <property type="resolution" value="4.03 A"/>
    <property type="chains" value="B/F=1-220"/>
</dbReference>
<dbReference type="PDB" id="8CE1">
    <property type="method" value="EM"/>
    <property type="resolution" value="3.47 A"/>
    <property type="chains" value="B/b=1-220"/>
</dbReference>
<dbReference type="PDB" id="8CE5">
    <property type="method" value="EM"/>
    <property type="resolution" value="3.62 A"/>
    <property type="chains" value="B/b=1-220"/>
</dbReference>
<dbReference type="PDB" id="8CE8">
    <property type="method" value="EM"/>
    <property type="resolution" value="3.81 A"/>
    <property type="chains" value="B/b=1-220"/>
</dbReference>
<dbReference type="PDB" id="8CEA">
    <property type="method" value="EM"/>
    <property type="resolution" value="3.94 A"/>
    <property type="chains" value="B/b=1-220"/>
</dbReference>
<dbReference type="PDBsum" id="7F02"/>
<dbReference type="PDBsum" id="7F03"/>
<dbReference type="PDBsum" id="7F04"/>
<dbReference type="PDBsum" id="7VFJ"/>
<dbReference type="PDBsum" id="7VFP"/>
<dbReference type="PDBsum" id="8CE1"/>
<dbReference type="PDBsum" id="8CE5"/>
<dbReference type="PDBsum" id="8CE8"/>
<dbReference type="PDBsum" id="8CEA"/>
<dbReference type="EMDB" id="EMD-16597"/>
<dbReference type="EMDB" id="EMD-16599"/>
<dbReference type="EMDB" id="EMD-16601"/>
<dbReference type="EMDB" id="EMD-16602"/>
<dbReference type="EMDB" id="EMD-31394"/>
<dbReference type="EMDB" id="EMD-31395"/>
<dbReference type="EMDB" id="EMD-31396"/>
<dbReference type="EMDB" id="EMD-31956"/>
<dbReference type="EMDB" id="EMD-31957"/>
<dbReference type="SMR" id="P0ABL8"/>
<dbReference type="BioGRID" id="4260485">
    <property type="interactions" value="8"/>
</dbReference>
<dbReference type="ComplexPortal" id="CPX-3568">
    <property type="entry name" value="CcmABCDE system I cytochrome c biogenesis complex"/>
</dbReference>
<dbReference type="DIP" id="DIP-48046N"/>
<dbReference type="FunCoup" id="P0ABL8">
    <property type="interactions" value="681"/>
</dbReference>
<dbReference type="IntAct" id="P0ABL8">
    <property type="interactions" value="11"/>
</dbReference>
<dbReference type="STRING" id="511145.b2200"/>
<dbReference type="PaxDb" id="511145-b2200"/>
<dbReference type="EnsemblBacteria" id="AAC75260">
    <property type="protein sequence ID" value="AAC75260"/>
    <property type="gene ID" value="b2200"/>
</dbReference>
<dbReference type="GeneID" id="93774978"/>
<dbReference type="GeneID" id="946692"/>
<dbReference type="KEGG" id="ecj:JW2188"/>
<dbReference type="KEGG" id="eco:b2200"/>
<dbReference type="PATRIC" id="fig|1411691.4.peg.36"/>
<dbReference type="EchoBASE" id="EB1988"/>
<dbReference type="eggNOG" id="COG2386">
    <property type="taxonomic scope" value="Bacteria"/>
</dbReference>
<dbReference type="HOGENOM" id="CLU_079069_1_0_6"/>
<dbReference type="InParanoid" id="P0ABL8"/>
<dbReference type="OMA" id="IGPGILW"/>
<dbReference type="OrthoDB" id="9799895at2"/>
<dbReference type="PhylomeDB" id="P0ABL8"/>
<dbReference type="BioCyc" id="EcoCyc:CCMB-MONOMER"/>
<dbReference type="BioCyc" id="MetaCyc:CCMB-MONOMER"/>
<dbReference type="PRO" id="PR:P0ABL8"/>
<dbReference type="Proteomes" id="UP000000625">
    <property type="component" value="Chromosome"/>
</dbReference>
<dbReference type="GO" id="GO:0043190">
    <property type="term" value="C:ATP-binding cassette (ABC) transporter complex"/>
    <property type="evidence" value="ECO:0000303"/>
    <property type="project" value="ComplexPortal"/>
</dbReference>
<dbReference type="GO" id="GO:0005886">
    <property type="term" value="C:plasma membrane"/>
    <property type="evidence" value="ECO:0000314"/>
    <property type="project" value="EcoCyc"/>
</dbReference>
<dbReference type="GO" id="GO:0015232">
    <property type="term" value="F:heme transmembrane transporter activity"/>
    <property type="evidence" value="ECO:0007669"/>
    <property type="project" value="InterPro"/>
</dbReference>
<dbReference type="GO" id="GO:1903607">
    <property type="term" value="P:cytochrome c biosynthetic process"/>
    <property type="evidence" value="ECO:0000314"/>
    <property type="project" value="EcoCyc"/>
</dbReference>
<dbReference type="GO" id="GO:0017004">
    <property type="term" value="P:cytochrome complex assembly"/>
    <property type="evidence" value="ECO:0000303"/>
    <property type="project" value="ComplexPortal"/>
</dbReference>
<dbReference type="GO" id="GO:1904334">
    <property type="term" value="P:heme import across plasma membrane"/>
    <property type="evidence" value="ECO:0000303"/>
    <property type="project" value="ComplexPortal"/>
</dbReference>
<dbReference type="InterPro" id="IPR003544">
    <property type="entry name" value="Cyt_c_biogenesis_CcmB"/>
</dbReference>
<dbReference type="InterPro" id="IPR026031">
    <property type="entry name" value="Cyt_c_CcmB_bac"/>
</dbReference>
<dbReference type="NCBIfam" id="TIGR01190">
    <property type="entry name" value="ccmB"/>
    <property type="match status" value="1"/>
</dbReference>
<dbReference type="PANTHER" id="PTHR30070:SF1">
    <property type="entry name" value="CYTOCHROME C BIOGENESIS B-RELATED"/>
    <property type="match status" value="1"/>
</dbReference>
<dbReference type="PANTHER" id="PTHR30070">
    <property type="entry name" value="HEME EXPORTER PROTEIN B"/>
    <property type="match status" value="1"/>
</dbReference>
<dbReference type="Pfam" id="PF03379">
    <property type="entry name" value="CcmB"/>
    <property type="match status" value="1"/>
</dbReference>
<dbReference type="PIRSF" id="PIRSF002764">
    <property type="entry name" value="CcmB"/>
    <property type="match status" value="1"/>
</dbReference>
<dbReference type="PRINTS" id="PR01414">
    <property type="entry name" value="CCMBBIOGNSIS"/>
</dbReference>
<accession>P0ABL8</accession>
<accession>P33930</accession>
<accession>Q2MAP3</accession>
<reference key="1">
    <citation type="submission" date="1993-10" db="EMBL/GenBank/DDBJ databases">
        <title>Automated multiplex sequencing of the E.coli genome.</title>
        <authorList>
            <person name="Richterich P."/>
            <person name="Lakey N."/>
            <person name="Gryan G."/>
            <person name="Jaehn L."/>
            <person name="Mintz L."/>
            <person name="Robison K."/>
            <person name="Church G.M."/>
        </authorList>
    </citation>
    <scope>NUCLEOTIDE SEQUENCE [LARGE SCALE GENOMIC DNA]</scope>
    <source>
        <strain>K12 / BHB2600</strain>
    </source>
</reference>
<reference key="2">
    <citation type="journal article" date="1997" name="Science">
        <title>The complete genome sequence of Escherichia coli K-12.</title>
        <authorList>
            <person name="Blattner F.R."/>
            <person name="Plunkett G. III"/>
            <person name="Bloch C.A."/>
            <person name="Perna N.T."/>
            <person name="Burland V."/>
            <person name="Riley M."/>
            <person name="Collado-Vides J."/>
            <person name="Glasner J.D."/>
            <person name="Rode C.K."/>
            <person name="Mayhew G.F."/>
            <person name="Gregor J."/>
            <person name="Davis N.W."/>
            <person name="Kirkpatrick H.A."/>
            <person name="Goeden M.A."/>
            <person name="Rose D.J."/>
            <person name="Mau B."/>
            <person name="Shao Y."/>
        </authorList>
    </citation>
    <scope>NUCLEOTIDE SEQUENCE [LARGE SCALE GENOMIC DNA]</scope>
    <source>
        <strain>K12 / MG1655 / ATCC 47076</strain>
    </source>
</reference>
<reference key="3">
    <citation type="journal article" date="2006" name="Mol. Syst. Biol.">
        <title>Highly accurate genome sequences of Escherichia coli K-12 strains MG1655 and W3110.</title>
        <authorList>
            <person name="Hayashi K."/>
            <person name="Morooka N."/>
            <person name="Yamamoto Y."/>
            <person name="Fujita K."/>
            <person name="Isono K."/>
            <person name="Choi S."/>
            <person name="Ohtsubo E."/>
            <person name="Baba T."/>
            <person name="Wanner B.L."/>
            <person name="Mori H."/>
            <person name="Horiuchi T."/>
        </authorList>
    </citation>
    <scope>NUCLEOTIDE SEQUENCE [LARGE SCALE GENOMIC DNA]</scope>
    <source>
        <strain>K12 / W3110 / ATCC 27325 / DSM 5911</strain>
    </source>
</reference>
<reference key="4">
    <citation type="journal article" date="1995" name="J. Bacteriol.">
        <title>Escherichia coli genes required for cytochrome c maturation.</title>
        <authorList>
            <person name="Thoeny-Meyer L."/>
            <person name="Fischer F."/>
            <person name="Kunzler P."/>
            <person name="Ritz D."/>
            <person name="Hennecke H."/>
        </authorList>
    </citation>
    <scope>CHARACTERIZATION</scope>
    <scope>GENE NAME</scope>
</reference>
<reference key="5">
    <citation type="journal article" date="2005" name="Science">
        <title>Global topology analysis of the Escherichia coli inner membrane proteome.</title>
        <authorList>
            <person name="Daley D.O."/>
            <person name="Rapp M."/>
            <person name="Granseth E."/>
            <person name="Melen K."/>
            <person name="Drew D."/>
            <person name="von Heijne G."/>
        </authorList>
    </citation>
    <scope>TOPOLOGY [LARGE SCALE ANALYSIS]</scope>
    <source>
        <strain>K12 / MG1655 / ATCC 47076</strain>
    </source>
</reference>
<sequence>MMFWRIFRLELRVAFRHSAEIANPLWFFLIVITLFPLSIGPEPQLLARIAPGIIWVAALLSSLLALERLFRDDLQDGSLEQLMLLPLPLPAVVLAKVMAHWMVTGLPLLILSPLVAMLLGMDVYGWQVMALTLLLGTPTLGFLGAPGVALTVGLKRGGVLLSILVLPLTIPLLIFATAAMDAASMHLPVDGYLAILGALLAGTATLSPFATAAALRISIQ</sequence>
<proteinExistence type="evidence at protein level"/>
<protein>
    <recommendedName>
        <fullName>Heme exporter protein B</fullName>
    </recommendedName>
    <alternativeName>
        <fullName>Cytochrome c-type biogenesis protein CcmB</fullName>
    </alternativeName>
</protein>
<gene>
    <name type="primary">ccmB</name>
    <name type="synonym">yejV</name>
    <name type="ordered locus">b2200</name>
    <name type="ordered locus">JW2188</name>
</gene>
<keyword id="KW-0002">3D-structure</keyword>
<keyword id="KW-0997">Cell inner membrane</keyword>
<keyword id="KW-1003">Cell membrane</keyword>
<keyword id="KW-0201">Cytochrome c-type biogenesis</keyword>
<keyword id="KW-0472">Membrane</keyword>
<keyword id="KW-1185">Reference proteome</keyword>
<keyword id="KW-0812">Transmembrane</keyword>
<keyword id="KW-1133">Transmembrane helix</keyword>
<keyword id="KW-0813">Transport</keyword>
<comment type="function">
    <text>Required for the export of heme to the periplasm for the biogenesis of c-type cytochromes.</text>
</comment>
<comment type="interaction">
    <interactant intactId="EBI-546936">
        <id>P0ABL8</id>
    </interactant>
    <interactant intactId="EBI-6402796">
        <id>P33931</id>
        <label>ccmA</label>
    </interactant>
    <organismsDiffer>false</organismsDiffer>
    <experiments>2</experiments>
</comment>
<comment type="subcellular location">
    <subcellularLocation>
        <location>Cell inner membrane</location>
        <topology>Multi-pass membrane protein</topology>
    </subcellularLocation>
</comment>
<comment type="similarity">
    <text evidence="2">Belongs to the CcmB/CycW/HelB family.</text>
</comment>
<organism>
    <name type="scientific">Escherichia coli (strain K12)</name>
    <dbReference type="NCBI Taxonomy" id="83333"/>
    <lineage>
        <taxon>Bacteria</taxon>
        <taxon>Pseudomonadati</taxon>
        <taxon>Pseudomonadota</taxon>
        <taxon>Gammaproteobacteria</taxon>
        <taxon>Enterobacterales</taxon>
        <taxon>Enterobacteriaceae</taxon>
        <taxon>Escherichia</taxon>
    </lineage>
</organism>
<evidence type="ECO:0000255" key="1"/>
<evidence type="ECO:0000305" key="2"/>
<evidence type="ECO:0007829" key="3">
    <source>
        <dbReference type="PDB" id="7F02"/>
    </source>
</evidence>
<evidence type="ECO:0007829" key="4">
    <source>
        <dbReference type="PDB" id="7F04"/>
    </source>
</evidence>
<name>CCMB_ECOLI</name>
<feature type="chain" id="PRO_0000201539" description="Heme exporter protein B">
    <location>
        <begin position="1"/>
        <end position="220"/>
    </location>
</feature>
<feature type="topological domain" description="Cytoplasmic" evidence="1">
    <location>
        <begin position="1"/>
        <end position="20"/>
    </location>
</feature>
<feature type="transmembrane region" description="Helical" evidence="1">
    <location>
        <begin position="21"/>
        <end position="41"/>
    </location>
</feature>
<feature type="topological domain" description="Periplasmic" evidence="1">
    <location>
        <begin position="42"/>
        <end position="44"/>
    </location>
</feature>
<feature type="transmembrane region" description="Helical" evidence="1">
    <location>
        <begin position="45"/>
        <end position="65"/>
    </location>
</feature>
<feature type="topological domain" description="Cytoplasmic" evidence="1">
    <location>
        <begin position="66"/>
        <end position="100"/>
    </location>
</feature>
<feature type="transmembrane region" description="Helical" evidence="1">
    <location>
        <begin position="101"/>
        <end position="121"/>
    </location>
</feature>
<feature type="topological domain" description="Periplasmic" evidence="1">
    <location>
        <begin position="122"/>
        <end position="127"/>
    </location>
</feature>
<feature type="transmembrane region" description="Helical" evidence="1">
    <location>
        <begin position="128"/>
        <end position="148"/>
    </location>
</feature>
<feature type="topological domain" description="Cytoplasmic" evidence="1">
    <location>
        <begin position="149"/>
        <end position="158"/>
    </location>
</feature>
<feature type="transmembrane region" description="Helical" evidence="1">
    <location>
        <begin position="159"/>
        <end position="179"/>
    </location>
</feature>
<feature type="topological domain" description="Periplasmic" evidence="1">
    <location>
        <begin position="180"/>
        <end position="192"/>
    </location>
</feature>
<feature type="transmembrane region" description="Helical" evidence="1">
    <location>
        <begin position="193"/>
        <end position="213"/>
    </location>
</feature>
<feature type="topological domain" description="Cytoplasmic" evidence="1">
    <location>
        <begin position="214"/>
        <end position="220"/>
    </location>
</feature>
<feature type="helix" evidence="4">
    <location>
        <begin position="3"/>
        <end position="14"/>
    </location>
</feature>
<feature type="helix" evidence="4">
    <location>
        <begin position="18"/>
        <end position="22"/>
    </location>
</feature>
<feature type="helix" evidence="4">
    <location>
        <begin position="23"/>
        <end position="34"/>
    </location>
</feature>
<feature type="helix" evidence="4">
    <location>
        <begin position="36"/>
        <end position="39"/>
    </location>
</feature>
<feature type="helix" evidence="4">
    <location>
        <begin position="43"/>
        <end position="75"/>
    </location>
</feature>
<feature type="strand" evidence="4">
    <location>
        <begin position="78"/>
        <end position="84"/>
    </location>
</feature>
<feature type="helix" evidence="4">
    <location>
        <begin position="89"/>
        <end position="110"/>
    </location>
</feature>
<feature type="helix" evidence="4">
    <location>
        <begin position="112"/>
        <end position="118"/>
    </location>
</feature>
<feature type="helix" evidence="4">
    <location>
        <begin position="123"/>
        <end position="142"/>
    </location>
</feature>
<feature type="helix" evidence="4">
    <location>
        <begin position="145"/>
        <end position="151"/>
    </location>
</feature>
<feature type="strand" evidence="3">
    <location>
        <begin position="154"/>
        <end position="156"/>
    </location>
</feature>
<feature type="helix" evidence="4">
    <location>
        <begin position="159"/>
        <end position="164"/>
    </location>
</feature>
<feature type="helix" evidence="4">
    <location>
        <begin position="167"/>
        <end position="169"/>
    </location>
</feature>
<feature type="helix" evidence="4">
    <location>
        <begin position="170"/>
        <end position="184"/>
    </location>
</feature>
<feature type="helix" evidence="4">
    <location>
        <begin position="190"/>
        <end position="219"/>
    </location>
</feature>